<organism>
    <name type="scientific">Drosophila melanogaster</name>
    <name type="common">Fruit fly</name>
    <dbReference type="NCBI Taxonomy" id="7227"/>
    <lineage>
        <taxon>Eukaryota</taxon>
        <taxon>Metazoa</taxon>
        <taxon>Ecdysozoa</taxon>
        <taxon>Arthropoda</taxon>
        <taxon>Hexapoda</taxon>
        <taxon>Insecta</taxon>
        <taxon>Pterygota</taxon>
        <taxon>Neoptera</taxon>
        <taxon>Endopterygota</taxon>
        <taxon>Diptera</taxon>
        <taxon>Brachycera</taxon>
        <taxon>Muscomorpha</taxon>
        <taxon>Ephydroidea</taxon>
        <taxon>Drosophilidae</taxon>
        <taxon>Drosophila</taxon>
        <taxon>Sophophora</taxon>
    </lineage>
</organism>
<reference key="1">
    <citation type="journal article" date="2003" name="Proc. Natl. Acad. Sci. U.S.A.">
        <title>Shade is the Drosophila P450 enzyme that mediates the hydroxylation of ecdysone to the steroid insect molting hormone 20-hydroxyecdysone.</title>
        <authorList>
            <person name="Petryk A."/>
            <person name="Warren J.T."/>
            <person name="Marques G."/>
            <person name="Jarcho M.P."/>
            <person name="Gilbert L.I."/>
            <person name="Kahler J."/>
            <person name="Parvy J.-P."/>
            <person name="Li Y."/>
            <person name="Dauphin-Villemant C."/>
            <person name="O'Connor M.B."/>
        </authorList>
    </citation>
    <scope>NUCLEOTIDE SEQUENCE [MRNA] (ISOFORM B)</scope>
    <scope>FUNCTION</scope>
    <scope>ENZYME ACTIVITY</scope>
    <scope>PATHWAY</scope>
    <scope>SUBCELLULAR LOCATION</scope>
    <scope>TISSUE SPECIFICITY</scope>
    <scope>MUTAGENESIS OF GLU-225</scope>
</reference>
<reference key="2">
    <citation type="journal article" date="2000" name="Science">
        <title>The genome sequence of Drosophila melanogaster.</title>
        <authorList>
            <person name="Adams M.D."/>
            <person name="Celniker S.E."/>
            <person name="Holt R.A."/>
            <person name="Evans C.A."/>
            <person name="Gocayne J.D."/>
            <person name="Amanatides P.G."/>
            <person name="Scherer S.E."/>
            <person name="Li P.W."/>
            <person name="Hoskins R.A."/>
            <person name="Galle R.F."/>
            <person name="George R.A."/>
            <person name="Lewis S.E."/>
            <person name="Richards S."/>
            <person name="Ashburner M."/>
            <person name="Henderson S.N."/>
            <person name="Sutton G.G."/>
            <person name="Wortman J.R."/>
            <person name="Yandell M.D."/>
            <person name="Zhang Q."/>
            <person name="Chen L.X."/>
            <person name="Brandon R.C."/>
            <person name="Rogers Y.-H.C."/>
            <person name="Blazej R.G."/>
            <person name="Champe M."/>
            <person name="Pfeiffer B.D."/>
            <person name="Wan K.H."/>
            <person name="Doyle C."/>
            <person name="Baxter E.G."/>
            <person name="Helt G."/>
            <person name="Nelson C.R."/>
            <person name="Miklos G.L.G."/>
            <person name="Abril J.F."/>
            <person name="Agbayani A."/>
            <person name="An H.-J."/>
            <person name="Andrews-Pfannkoch C."/>
            <person name="Baldwin D."/>
            <person name="Ballew R.M."/>
            <person name="Basu A."/>
            <person name="Baxendale J."/>
            <person name="Bayraktaroglu L."/>
            <person name="Beasley E.M."/>
            <person name="Beeson K.Y."/>
            <person name="Benos P.V."/>
            <person name="Berman B.P."/>
            <person name="Bhandari D."/>
            <person name="Bolshakov S."/>
            <person name="Borkova D."/>
            <person name="Botchan M.R."/>
            <person name="Bouck J."/>
            <person name="Brokstein P."/>
            <person name="Brottier P."/>
            <person name="Burtis K.C."/>
            <person name="Busam D.A."/>
            <person name="Butler H."/>
            <person name="Cadieu E."/>
            <person name="Center A."/>
            <person name="Chandra I."/>
            <person name="Cherry J.M."/>
            <person name="Cawley S."/>
            <person name="Dahlke C."/>
            <person name="Davenport L.B."/>
            <person name="Davies P."/>
            <person name="de Pablos B."/>
            <person name="Delcher A."/>
            <person name="Deng Z."/>
            <person name="Mays A.D."/>
            <person name="Dew I."/>
            <person name="Dietz S.M."/>
            <person name="Dodson K."/>
            <person name="Doup L.E."/>
            <person name="Downes M."/>
            <person name="Dugan-Rocha S."/>
            <person name="Dunkov B.C."/>
            <person name="Dunn P."/>
            <person name="Durbin K.J."/>
            <person name="Evangelista C.C."/>
            <person name="Ferraz C."/>
            <person name="Ferriera S."/>
            <person name="Fleischmann W."/>
            <person name="Fosler C."/>
            <person name="Gabrielian A.E."/>
            <person name="Garg N.S."/>
            <person name="Gelbart W.M."/>
            <person name="Glasser K."/>
            <person name="Glodek A."/>
            <person name="Gong F."/>
            <person name="Gorrell J.H."/>
            <person name="Gu Z."/>
            <person name="Guan P."/>
            <person name="Harris M."/>
            <person name="Harris N.L."/>
            <person name="Harvey D.A."/>
            <person name="Heiman T.J."/>
            <person name="Hernandez J.R."/>
            <person name="Houck J."/>
            <person name="Hostin D."/>
            <person name="Houston K.A."/>
            <person name="Howland T.J."/>
            <person name="Wei M.-H."/>
            <person name="Ibegwam C."/>
            <person name="Jalali M."/>
            <person name="Kalush F."/>
            <person name="Karpen G.H."/>
            <person name="Ke Z."/>
            <person name="Kennison J.A."/>
            <person name="Ketchum K.A."/>
            <person name="Kimmel B.E."/>
            <person name="Kodira C.D."/>
            <person name="Kraft C.L."/>
            <person name="Kravitz S."/>
            <person name="Kulp D."/>
            <person name="Lai Z."/>
            <person name="Lasko P."/>
            <person name="Lei Y."/>
            <person name="Levitsky A.A."/>
            <person name="Li J.H."/>
            <person name="Li Z."/>
            <person name="Liang Y."/>
            <person name="Lin X."/>
            <person name="Liu X."/>
            <person name="Mattei B."/>
            <person name="McIntosh T.C."/>
            <person name="McLeod M.P."/>
            <person name="McPherson D."/>
            <person name="Merkulov G."/>
            <person name="Milshina N.V."/>
            <person name="Mobarry C."/>
            <person name="Morris J."/>
            <person name="Moshrefi A."/>
            <person name="Mount S.M."/>
            <person name="Moy M."/>
            <person name="Murphy B."/>
            <person name="Murphy L."/>
            <person name="Muzny D.M."/>
            <person name="Nelson D.L."/>
            <person name="Nelson D.R."/>
            <person name="Nelson K.A."/>
            <person name="Nixon K."/>
            <person name="Nusskern D.R."/>
            <person name="Pacleb J.M."/>
            <person name="Palazzolo M."/>
            <person name="Pittman G.S."/>
            <person name="Pan S."/>
            <person name="Pollard J."/>
            <person name="Puri V."/>
            <person name="Reese M.G."/>
            <person name="Reinert K."/>
            <person name="Remington K."/>
            <person name="Saunders R.D.C."/>
            <person name="Scheeler F."/>
            <person name="Shen H."/>
            <person name="Shue B.C."/>
            <person name="Siden-Kiamos I."/>
            <person name="Simpson M."/>
            <person name="Skupski M.P."/>
            <person name="Smith T.J."/>
            <person name="Spier E."/>
            <person name="Spradling A.C."/>
            <person name="Stapleton M."/>
            <person name="Strong R."/>
            <person name="Sun E."/>
            <person name="Svirskas R."/>
            <person name="Tector C."/>
            <person name="Turner R."/>
            <person name="Venter E."/>
            <person name="Wang A.H."/>
            <person name="Wang X."/>
            <person name="Wang Z.-Y."/>
            <person name="Wassarman D.A."/>
            <person name="Weinstock G.M."/>
            <person name="Weissenbach J."/>
            <person name="Williams S.M."/>
            <person name="Woodage T."/>
            <person name="Worley K.C."/>
            <person name="Wu D."/>
            <person name="Yang S."/>
            <person name="Yao Q.A."/>
            <person name="Ye J."/>
            <person name="Yeh R.-F."/>
            <person name="Zaveri J.S."/>
            <person name="Zhan M."/>
            <person name="Zhang G."/>
            <person name="Zhao Q."/>
            <person name="Zheng L."/>
            <person name="Zheng X.H."/>
            <person name="Zhong F.N."/>
            <person name="Zhong W."/>
            <person name="Zhou X."/>
            <person name="Zhu S.C."/>
            <person name="Zhu X."/>
            <person name="Smith H.O."/>
            <person name="Gibbs R.A."/>
            <person name="Myers E.W."/>
            <person name="Rubin G.M."/>
            <person name="Venter J.C."/>
        </authorList>
    </citation>
    <scope>NUCLEOTIDE SEQUENCE [LARGE SCALE GENOMIC DNA]</scope>
    <source>
        <strain>Berkeley</strain>
    </source>
</reference>
<reference key="3">
    <citation type="journal article" date="2002" name="Genome Biol.">
        <title>Annotation of the Drosophila melanogaster euchromatic genome: a systematic review.</title>
        <authorList>
            <person name="Misra S."/>
            <person name="Crosby M.A."/>
            <person name="Mungall C.J."/>
            <person name="Matthews B.B."/>
            <person name="Campbell K.S."/>
            <person name="Hradecky P."/>
            <person name="Huang Y."/>
            <person name="Kaminker J.S."/>
            <person name="Millburn G.H."/>
            <person name="Prochnik S.E."/>
            <person name="Smith C.D."/>
            <person name="Tupy J.L."/>
            <person name="Whitfield E.J."/>
            <person name="Bayraktaroglu L."/>
            <person name="Berman B.P."/>
            <person name="Bettencourt B.R."/>
            <person name="Celniker S.E."/>
            <person name="de Grey A.D.N.J."/>
            <person name="Drysdale R.A."/>
            <person name="Harris N.L."/>
            <person name="Richter J."/>
            <person name="Russo S."/>
            <person name="Schroeder A.J."/>
            <person name="Shu S.Q."/>
            <person name="Stapleton M."/>
            <person name="Yamada C."/>
            <person name="Ashburner M."/>
            <person name="Gelbart W.M."/>
            <person name="Rubin G.M."/>
            <person name="Lewis S.E."/>
        </authorList>
    </citation>
    <scope>GENOME REANNOTATION</scope>
    <scope>ALTERNATIVE SPLICING</scope>
    <source>
        <strain>Berkeley</strain>
    </source>
</reference>
<reference key="4">
    <citation type="journal article" date="2002" name="Genome Biol.">
        <title>A Drosophila full-length cDNA resource.</title>
        <authorList>
            <person name="Stapleton M."/>
            <person name="Carlson J.W."/>
            <person name="Brokstein P."/>
            <person name="Yu C."/>
            <person name="Champe M."/>
            <person name="George R.A."/>
            <person name="Guarin H."/>
            <person name="Kronmiller B."/>
            <person name="Pacleb J.M."/>
            <person name="Park S."/>
            <person name="Wan K.H."/>
            <person name="Rubin G.M."/>
            <person name="Celniker S.E."/>
        </authorList>
    </citation>
    <scope>NUCLEOTIDE SEQUENCE [LARGE SCALE MRNA] (ISOFORM C)</scope>
    <source>
        <strain>Berkeley</strain>
        <tissue>Testis</tissue>
    </source>
</reference>
<reference key="5">
    <citation type="journal article" date="2003" name="Mech. Dev.">
        <title>Regulation of glial cell number and differentiation by ecdysone and Fos signaling.</title>
        <authorList>
            <person name="Giesen K."/>
            <person name="Lammel U."/>
            <person name="Langehans D."/>
            <person name="Krukkert K."/>
            <person name="Bunse I."/>
            <person name="Klambt C."/>
        </authorList>
    </citation>
    <scope>FUNCTION</scope>
</reference>
<proteinExistence type="evidence at protein level"/>
<protein>
    <recommendedName>
        <fullName>Ecdysone 20-monooxygenase</fullName>
        <shortName>E20MO</shortName>
        <ecNumber>1.14.99.22</ecNumber>
    </recommendedName>
    <alternativeName>
        <fullName>CYPCCCXIVA1</fullName>
    </alternativeName>
    <alternativeName>
        <fullName>Cytochrome P450 314a1, mitochondrial</fullName>
    </alternativeName>
    <alternativeName>
        <fullName>Protein shade</fullName>
    </alternativeName>
</protein>
<accession>Q9VUF8</accession>
<accession>Q8T483</accession>
<name>CP314_DROME</name>
<evidence type="ECO:0000250" key="1"/>
<evidence type="ECO:0000269" key="2">
    <source>
    </source>
</evidence>
<evidence type="ECO:0000269" key="3">
    <source>
    </source>
</evidence>
<evidence type="ECO:0000303" key="4">
    <source>
    </source>
</evidence>
<evidence type="ECO:0000305" key="5"/>
<dbReference type="EC" id="1.14.99.22"/>
<dbReference type="EMBL" id="AF484414">
    <property type="protein sequence ID" value="AAQ05972.1"/>
    <property type="molecule type" value="mRNA"/>
</dbReference>
<dbReference type="EMBL" id="AE014296">
    <property type="protein sequence ID" value="AAS65010.1"/>
    <property type="molecule type" value="Genomic_DNA"/>
</dbReference>
<dbReference type="EMBL" id="AY089309">
    <property type="protein sequence ID" value="AAL90047.1"/>
    <property type="molecule type" value="mRNA"/>
</dbReference>
<dbReference type="RefSeq" id="NP_001261843.1">
    <molecule id="Q9VUF8-1"/>
    <property type="nucleotide sequence ID" value="NM_001274914.1"/>
</dbReference>
<dbReference type="RefSeq" id="NP_648709.2">
    <molecule id="Q9VUF8-2"/>
    <property type="nucleotide sequence ID" value="NM_140452.2"/>
</dbReference>
<dbReference type="RefSeq" id="NP_996074.1">
    <molecule id="Q9VUF8-1"/>
    <property type="nucleotide sequence ID" value="NM_206352.2"/>
</dbReference>
<dbReference type="SMR" id="Q9VUF8"/>
<dbReference type="BioGRID" id="64922">
    <property type="interactions" value="2"/>
</dbReference>
<dbReference type="FunCoup" id="Q9VUF8">
    <property type="interactions" value="35"/>
</dbReference>
<dbReference type="IntAct" id="Q9VUF8">
    <property type="interactions" value="9"/>
</dbReference>
<dbReference type="STRING" id="7227.FBpp0305245"/>
<dbReference type="PaxDb" id="7227-FBpp0089324"/>
<dbReference type="DNASU" id="39592"/>
<dbReference type="EnsemblMetazoa" id="FBtr0075676">
    <molecule id="Q9VUF8-1"/>
    <property type="protein sequence ID" value="FBpp0089324"/>
    <property type="gene ID" value="FBgn0003388"/>
</dbReference>
<dbReference type="EnsemblMetazoa" id="FBtr0304700">
    <molecule id="Q9VUF8-2"/>
    <property type="protein sequence ID" value="FBpp0293243"/>
    <property type="gene ID" value="FBgn0003388"/>
</dbReference>
<dbReference type="EnsemblMetazoa" id="FBtr0333031">
    <molecule id="Q9VUF8-1"/>
    <property type="protein sequence ID" value="FBpp0305245"/>
    <property type="gene ID" value="FBgn0003388"/>
</dbReference>
<dbReference type="GeneID" id="39592"/>
<dbReference type="KEGG" id="dme:Dmel_CG13478"/>
<dbReference type="UCSC" id="CG13478-RA">
    <molecule id="Q9VUF8-1"/>
    <property type="organism name" value="d. melanogaster"/>
</dbReference>
<dbReference type="AGR" id="FB:FBgn0003388"/>
<dbReference type="CTD" id="56961"/>
<dbReference type="FlyBase" id="FBgn0003388">
    <property type="gene designation" value="shd"/>
</dbReference>
<dbReference type="VEuPathDB" id="VectorBase:FBgn0003388"/>
<dbReference type="eggNOG" id="KOG0159">
    <property type="taxonomic scope" value="Eukaryota"/>
</dbReference>
<dbReference type="InParanoid" id="Q9VUF8"/>
<dbReference type="OMA" id="KQFCPER"/>
<dbReference type="OrthoDB" id="3945418at2759"/>
<dbReference type="PhylomeDB" id="Q9VUF8"/>
<dbReference type="BioCyc" id="MetaCyc:MONOMER-7726"/>
<dbReference type="BRENDA" id="1.14.99.22">
    <property type="organism ID" value="1994"/>
</dbReference>
<dbReference type="UniPathway" id="UPA00765"/>
<dbReference type="BioGRID-ORCS" id="39592">
    <property type="hits" value="0 hits in 1 CRISPR screen"/>
</dbReference>
<dbReference type="ChiTaRS" id="N">
    <property type="organism name" value="fly"/>
</dbReference>
<dbReference type="GenomeRNAi" id="39592"/>
<dbReference type="PRO" id="PR:Q9VUF8"/>
<dbReference type="Proteomes" id="UP000000803">
    <property type="component" value="Chromosome 3L"/>
</dbReference>
<dbReference type="Bgee" id="FBgn0003388">
    <property type="expression patterns" value="Expressed in nurse follicle cell (Drosophila) in ovary and 25 other cell types or tissues"/>
</dbReference>
<dbReference type="ExpressionAtlas" id="Q9VUF8">
    <property type="expression patterns" value="baseline and differential"/>
</dbReference>
<dbReference type="GO" id="GO:0031966">
    <property type="term" value="C:mitochondrial membrane"/>
    <property type="evidence" value="ECO:0007669"/>
    <property type="project" value="UniProtKB-SubCell"/>
</dbReference>
<dbReference type="GO" id="GO:0005739">
    <property type="term" value="C:mitochondrion"/>
    <property type="evidence" value="ECO:0000314"/>
    <property type="project" value="FlyBase"/>
</dbReference>
<dbReference type="GO" id="GO:0004501">
    <property type="term" value="F:ecdysone 20-monooxygenase activity"/>
    <property type="evidence" value="ECO:0000314"/>
    <property type="project" value="FlyBase"/>
</dbReference>
<dbReference type="GO" id="GO:0020037">
    <property type="term" value="F:heme binding"/>
    <property type="evidence" value="ECO:0007669"/>
    <property type="project" value="InterPro"/>
</dbReference>
<dbReference type="GO" id="GO:0005506">
    <property type="term" value="F:iron ion binding"/>
    <property type="evidence" value="ECO:0007669"/>
    <property type="project" value="InterPro"/>
</dbReference>
<dbReference type="GO" id="GO:0007298">
    <property type="term" value="P:border follicle cell migration"/>
    <property type="evidence" value="ECO:0000315"/>
    <property type="project" value="FlyBase"/>
</dbReference>
<dbReference type="GO" id="GO:0007417">
    <property type="term" value="P:central nervous system development"/>
    <property type="evidence" value="ECO:0000315"/>
    <property type="project" value="FlyBase"/>
</dbReference>
<dbReference type="GO" id="GO:0007391">
    <property type="term" value="P:dorsal closure"/>
    <property type="evidence" value="ECO:0000315"/>
    <property type="project" value="FlyBase"/>
</dbReference>
<dbReference type="GO" id="GO:0045456">
    <property type="term" value="P:ecdysteroid biosynthetic process"/>
    <property type="evidence" value="ECO:0000314"/>
    <property type="project" value="FlyBase"/>
</dbReference>
<dbReference type="GO" id="GO:0007295">
    <property type="term" value="P:growth of a germarium-derived egg chamber"/>
    <property type="evidence" value="ECO:0000315"/>
    <property type="project" value="FlyBase"/>
</dbReference>
<dbReference type="GO" id="GO:0008258">
    <property type="term" value="P:head involution"/>
    <property type="evidence" value="ECO:0000315"/>
    <property type="project" value="FlyBase"/>
</dbReference>
<dbReference type="GO" id="GO:0007494">
    <property type="term" value="P:midgut development"/>
    <property type="evidence" value="ECO:0000315"/>
    <property type="project" value="FlyBase"/>
</dbReference>
<dbReference type="GO" id="GO:0035074">
    <property type="term" value="P:pupation"/>
    <property type="evidence" value="ECO:0000315"/>
    <property type="project" value="FlyBase"/>
</dbReference>
<dbReference type="CDD" id="cd11054">
    <property type="entry name" value="CYP24A1-like"/>
    <property type="match status" value="1"/>
</dbReference>
<dbReference type="FunFam" id="1.10.630.10:FF:000006">
    <property type="entry name" value="Cytochrome P450 302a1, mitochondrial"/>
    <property type="match status" value="1"/>
</dbReference>
<dbReference type="Gene3D" id="1.10.630.10">
    <property type="entry name" value="Cytochrome P450"/>
    <property type="match status" value="1"/>
</dbReference>
<dbReference type="InterPro" id="IPR050479">
    <property type="entry name" value="CYP11_CYP27_families"/>
</dbReference>
<dbReference type="InterPro" id="IPR001128">
    <property type="entry name" value="Cyt_P450"/>
</dbReference>
<dbReference type="InterPro" id="IPR017972">
    <property type="entry name" value="Cyt_P450_CS"/>
</dbReference>
<dbReference type="InterPro" id="IPR002401">
    <property type="entry name" value="Cyt_P450_E_grp-I"/>
</dbReference>
<dbReference type="InterPro" id="IPR036396">
    <property type="entry name" value="Cyt_P450_sf"/>
</dbReference>
<dbReference type="PANTHER" id="PTHR24279">
    <property type="entry name" value="CYTOCHROME P450"/>
    <property type="match status" value="1"/>
</dbReference>
<dbReference type="PANTHER" id="PTHR24279:SF120">
    <property type="entry name" value="CYTOCHROME P450"/>
    <property type="match status" value="1"/>
</dbReference>
<dbReference type="Pfam" id="PF00067">
    <property type="entry name" value="p450"/>
    <property type="match status" value="1"/>
</dbReference>
<dbReference type="PRINTS" id="PR00463">
    <property type="entry name" value="EP450I"/>
</dbReference>
<dbReference type="PRINTS" id="PR00385">
    <property type="entry name" value="P450"/>
</dbReference>
<dbReference type="SUPFAM" id="SSF48264">
    <property type="entry name" value="Cytochrome P450"/>
    <property type="match status" value="1"/>
</dbReference>
<dbReference type="PROSITE" id="PS00086">
    <property type="entry name" value="CYTOCHROME_P450"/>
    <property type="match status" value="1"/>
</dbReference>
<comment type="function">
    <text evidence="2 3">Required for CNS development; midline glial cells. Involved in the metabolism of insect hormones; responsible for all ecdysone 20-monooxygenase activity during embryonic, larval and adult stages. May be involved in the breakdown of synthetic insecticides.</text>
</comment>
<comment type="catalytic activity">
    <reaction evidence="3">
        <text>ecdysone + AH2 + O2 = 20-hydroxyecdysone + A + H2O</text>
        <dbReference type="Rhea" id="RHEA:14021"/>
        <dbReference type="ChEBI" id="CHEBI:13193"/>
        <dbReference type="ChEBI" id="CHEBI:15377"/>
        <dbReference type="ChEBI" id="CHEBI:15379"/>
        <dbReference type="ChEBI" id="CHEBI:16587"/>
        <dbReference type="ChEBI" id="CHEBI:16688"/>
        <dbReference type="ChEBI" id="CHEBI:17499"/>
        <dbReference type="EC" id="1.14.99.22"/>
    </reaction>
</comment>
<comment type="cofactor">
    <cofactor>
        <name>heme</name>
        <dbReference type="ChEBI" id="CHEBI:30413"/>
    </cofactor>
</comment>
<comment type="pathway">
    <text evidence="3">Steroid biosynthesis; ecdysteroid biosynthesis.</text>
</comment>
<comment type="subcellular location">
    <subcellularLocation>
        <location evidence="3">Mitochondrion membrane</location>
    </subcellularLocation>
</comment>
<comment type="alternative products">
    <event type="alternative splicing"/>
    <isoform>
        <id>Q9VUF8-1</id>
        <name>B</name>
        <sequence type="displayed"/>
    </isoform>
    <isoform>
        <id>Q9VUF8-2</id>
        <name>C</name>
        <sequence type="described" ref="VSP_009267"/>
    </isoform>
</comment>
<comment type="tissue specificity">
    <text evidence="3">Strong expression by embryonic stage 10 in epidermis, decreases significantly in older embryos. Third instar larvae show expression in the midgut copper cells, Malpighian tubules and fat body. In the adult ovaries, expression is seen in both nurse cells and centripetally migrating follicle cells.</text>
</comment>
<comment type="miscellaneous">
    <text>Member of the Halloween gene group.</text>
</comment>
<comment type="similarity">
    <text evidence="5">Belongs to the cytochrome P450 family.</text>
</comment>
<gene>
    <name type="primary">shd</name>
    <name type="synonym">CYP314A1</name>
    <name type="ORF">CG13478</name>
</gene>
<feature type="transit peptide" description="Mitochondrion">
    <location>
        <begin position="1"/>
        <end status="unknown"/>
    </location>
</feature>
<feature type="chain" id="PRO_0000003630" description="Ecdysone 20-monooxygenase">
    <location>
        <begin status="unknown"/>
        <end position="540"/>
    </location>
</feature>
<feature type="binding site" description="axial binding residue" evidence="1">
    <location>
        <position position="488"/>
    </location>
    <ligand>
        <name>heme</name>
        <dbReference type="ChEBI" id="CHEBI:30413"/>
    </ligand>
    <ligandPart>
        <name>Fe</name>
        <dbReference type="ChEBI" id="CHEBI:18248"/>
    </ligandPart>
</feature>
<feature type="splice variant" id="VSP_009267" description="In isoform C." evidence="4">
    <location>
        <begin position="1"/>
        <end position="107"/>
    </location>
</feature>
<feature type="mutagenesis site" description="In allele shd-Z383; failure of head involution. Defects in dorsal closure and aberrant gut looping." evidence="3">
    <original>E</original>
    <variation>K</variation>
    <location>
        <position position="225"/>
    </location>
</feature>
<feature type="sequence conflict" description="In Ref. 1; AAQ05972." evidence="5" ref="1">
    <original>G</original>
    <variation>V</variation>
    <location>
        <position position="14"/>
    </location>
</feature>
<feature type="sequence conflict" description="In Ref. 1; AAQ05972." evidence="5" ref="1">
    <original>I</original>
    <variation>T</variation>
    <location>
        <position position="198"/>
    </location>
</feature>
<sequence length="540" mass="61690">MAVILLLALALVLGCYCALHRHKLADIYLRPLLKNTLLEDFYHAELIQPEAPKRRRRGIWDIPGPKRIPFLGTKWIFLLFFRRYKMTKLHEVYADLNRQYGDIVLEVMPSNVPIVHLYNRDDLEKVLKYPSKYPFRPPTEIIVMYRQSRPDRYASVGIVNEQGPMWQRLRSSLTSSITSPRVLQNFLPALNAVCDDFIELLRARRDPDTLVVPNFEELANLMGLEAVCTLMLGRRMGFLAIDTKQPQKISQLAAAVKQLFISQRDSYYGLGLWKYFPTKTYRDFARAEDLIYDVISEIIDHELEELKKSAACEDDEAAGLRSIFLNILELKDLDIRDKKSAIIDFIAAGIETLANTLLFVLSSVTGDPGAMPRILSEFCEYRDTNILQDALTNATYTKACIQESYRLRPTAFCLARILEEDMELSGYSLNAGTVVLCQNMIACHKDSNFQGAKQFTPERWIDPATENFTVNVDNASIVVPFGVGRRSCPGKRFVEMEVVLLLAKMVLAFDVSFVKPLETEFEFLLAPKTPLSLRLSDRVF</sequence>
<keyword id="KW-0025">Alternative splicing</keyword>
<keyword id="KW-0349">Heme</keyword>
<keyword id="KW-0408">Iron</keyword>
<keyword id="KW-0472">Membrane</keyword>
<keyword id="KW-0479">Metal-binding</keyword>
<keyword id="KW-0496">Mitochondrion</keyword>
<keyword id="KW-0503">Monooxygenase</keyword>
<keyword id="KW-0560">Oxidoreductase</keyword>
<keyword id="KW-1185">Reference proteome</keyword>
<keyword id="KW-0809">Transit peptide</keyword>